<dbReference type="EMBL" id="CP000034">
    <property type="protein sequence ID" value="ABB63799.1"/>
    <property type="molecule type" value="Genomic_DNA"/>
</dbReference>
<dbReference type="RefSeq" id="WP_000920762.1">
    <property type="nucleotide sequence ID" value="NC_007606.1"/>
</dbReference>
<dbReference type="RefSeq" id="YP_405290.1">
    <property type="nucleotide sequence ID" value="NC_007606.1"/>
</dbReference>
<dbReference type="STRING" id="300267.SDY_3857"/>
<dbReference type="EnsemblBacteria" id="ABB63799">
    <property type="protein sequence ID" value="ABB63799"/>
    <property type="gene ID" value="SDY_3857"/>
</dbReference>
<dbReference type="KEGG" id="sdy:SDY_3857"/>
<dbReference type="PATRIC" id="fig|300267.13.peg.4557"/>
<dbReference type="HOGENOM" id="CLU_032288_0_0_6"/>
<dbReference type="Proteomes" id="UP000002716">
    <property type="component" value="Chromosome"/>
</dbReference>
<dbReference type="GO" id="GO:0005886">
    <property type="term" value="C:plasma membrane"/>
    <property type="evidence" value="ECO:0007669"/>
    <property type="project" value="UniProtKB-SubCell"/>
</dbReference>
<dbReference type="HAMAP" id="MF_00672">
    <property type="entry name" value="UPF0761"/>
    <property type="match status" value="1"/>
</dbReference>
<dbReference type="InterPro" id="IPR023679">
    <property type="entry name" value="UPF0761_bac"/>
</dbReference>
<dbReference type="InterPro" id="IPR017039">
    <property type="entry name" value="Virul_fac_BrkB"/>
</dbReference>
<dbReference type="NCBIfam" id="NF002457">
    <property type="entry name" value="PRK01637.1"/>
    <property type="match status" value="1"/>
</dbReference>
<dbReference type="NCBIfam" id="TIGR00765">
    <property type="entry name" value="yihY_not_rbn"/>
    <property type="match status" value="1"/>
</dbReference>
<dbReference type="PANTHER" id="PTHR30213">
    <property type="entry name" value="INNER MEMBRANE PROTEIN YHJD"/>
    <property type="match status" value="1"/>
</dbReference>
<dbReference type="PANTHER" id="PTHR30213:SF0">
    <property type="entry name" value="UPF0761 MEMBRANE PROTEIN YIHY"/>
    <property type="match status" value="1"/>
</dbReference>
<dbReference type="Pfam" id="PF03631">
    <property type="entry name" value="Virul_fac_BrkB"/>
    <property type="match status" value="1"/>
</dbReference>
<dbReference type="PIRSF" id="PIRSF035875">
    <property type="entry name" value="RNase_BN"/>
    <property type="match status" value="1"/>
</dbReference>
<organism>
    <name type="scientific">Shigella dysenteriae serotype 1 (strain Sd197)</name>
    <dbReference type="NCBI Taxonomy" id="300267"/>
    <lineage>
        <taxon>Bacteria</taxon>
        <taxon>Pseudomonadati</taxon>
        <taxon>Pseudomonadota</taxon>
        <taxon>Gammaproteobacteria</taxon>
        <taxon>Enterobacterales</taxon>
        <taxon>Enterobacteriaceae</taxon>
        <taxon>Shigella</taxon>
    </lineage>
</organism>
<name>YIHY_SHIDS</name>
<comment type="subcellular location">
    <subcellularLocation>
        <location evidence="1">Cell inner membrane</location>
        <topology evidence="1">Multi-pass membrane protein</topology>
    </subcellularLocation>
</comment>
<comment type="similarity">
    <text evidence="1">Belongs to the UPF0761 family.</text>
</comment>
<sequence>MLKTIQDKARHRTRPLWAWLKLLWQRIDEDNMTTLAGNLAYVSLLSLVPLVAVVFALFAAFPMFSDVSIQLRHFIFANFLPATGDVIQRYIEQFVANSNKMTAVGACGLIVTALLLMYSIDSALNTIWRSKRARPKIYSFAVYWMILTLGPLLAGASLAISSYLLSLRWASDLNTVIDNVLRIFPLLLSWISFWLLYSIVPTIRVPNRDAIVGAFVAALLFEAGKKGFALYITMFPSYQLIYGVLAVIPILFVWVYWTWCIVLLGAEITVTLGEYRKLKQAAEQEEDDEP</sequence>
<feature type="chain" id="PRO_1000044732" description="UPF0761 membrane protein YihY">
    <location>
        <begin position="1"/>
        <end position="290"/>
    </location>
</feature>
<feature type="transmembrane region" description="Helical" evidence="1">
    <location>
        <begin position="44"/>
        <end position="64"/>
    </location>
</feature>
<feature type="transmembrane region" description="Helical" evidence="1">
    <location>
        <begin position="104"/>
        <end position="124"/>
    </location>
</feature>
<feature type="transmembrane region" description="Helical" evidence="1">
    <location>
        <begin position="140"/>
        <end position="160"/>
    </location>
</feature>
<feature type="transmembrane region" description="Helical" evidence="1">
    <location>
        <begin position="183"/>
        <end position="203"/>
    </location>
</feature>
<feature type="transmembrane region" description="Helical" evidence="1">
    <location>
        <begin position="210"/>
        <end position="230"/>
    </location>
</feature>
<feature type="transmembrane region" description="Helical" evidence="1">
    <location>
        <begin position="244"/>
        <end position="264"/>
    </location>
</feature>
<keyword id="KW-0997">Cell inner membrane</keyword>
<keyword id="KW-1003">Cell membrane</keyword>
<keyword id="KW-0472">Membrane</keyword>
<keyword id="KW-1185">Reference proteome</keyword>
<keyword id="KW-0812">Transmembrane</keyword>
<keyword id="KW-1133">Transmembrane helix</keyword>
<proteinExistence type="inferred from homology"/>
<accession>Q32A56</accession>
<protein>
    <recommendedName>
        <fullName evidence="1">UPF0761 membrane protein YihY</fullName>
    </recommendedName>
</protein>
<reference key="1">
    <citation type="journal article" date="2005" name="Nucleic Acids Res.">
        <title>Genome dynamics and diversity of Shigella species, the etiologic agents of bacillary dysentery.</title>
        <authorList>
            <person name="Yang F."/>
            <person name="Yang J."/>
            <person name="Zhang X."/>
            <person name="Chen L."/>
            <person name="Jiang Y."/>
            <person name="Yan Y."/>
            <person name="Tang X."/>
            <person name="Wang J."/>
            <person name="Xiong Z."/>
            <person name="Dong J."/>
            <person name="Xue Y."/>
            <person name="Zhu Y."/>
            <person name="Xu X."/>
            <person name="Sun L."/>
            <person name="Chen S."/>
            <person name="Nie H."/>
            <person name="Peng J."/>
            <person name="Xu J."/>
            <person name="Wang Y."/>
            <person name="Yuan Z."/>
            <person name="Wen Y."/>
            <person name="Yao Z."/>
            <person name="Shen Y."/>
            <person name="Qiang B."/>
            <person name="Hou Y."/>
            <person name="Yu J."/>
            <person name="Jin Q."/>
        </authorList>
    </citation>
    <scope>NUCLEOTIDE SEQUENCE [LARGE SCALE GENOMIC DNA]</scope>
    <source>
        <strain>Sd197</strain>
    </source>
</reference>
<gene>
    <name evidence="1" type="primary">yihY</name>
    <name type="ordered locus">SDY_3857</name>
</gene>
<evidence type="ECO:0000255" key="1">
    <source>
        <dbReference type="HAMAP-Rule" id="MF_00672"/>
    </source>
</evidence>